<dbReference type="EMBL" id="CP000479">
    <property type="protein sequence ID" value="ABK67384.1"/>
    <property type="molecule type" value="Genomic_DNA"/>
</dbReference>
<dbReference type="RefSeq" id="WP_003872507.1">
    <property type="nucleotide sequence ID" value="NC_008595.1"/>
</dbReference>
<dbReference type="SMR" id="A0QEC2"/>
<dbReference type="KEGG" id="mav:MAV_2042"/>
<dbReference type="HOGENOM" id="CLU_028163_0_1_11"/>
<dbReference type="Proteomes" id="UP000001574">
    <property type="component" value="Chromosome"/>
</dbReference>
<dbReference type="GO" id="GO:0008832">
    <property type="term" value="F:dGTPase activity"/>
    <property type="evidence" value="ECO:0007669"/>
    <property type="project" value="TreeGrafter"/>
</dbReference>
<dbReference type="GO" id="GO:0006203">
    <property type="term" value="P:dGTP catabolic process"/>
    <property type="evidence" value="ECO:0007669"/>
    <property type="project" value="TreeGrafter"/>
</dbReference>
<dbReference type="CDD" id="cd00077">
    <property type="entry name" value="HDc"/>
    <property type="match status" value="1"/>
</dbReference>
<dbReference type="FunFam" id="1.10.3210.10:FF:000029">
    <property type="entry name" value="Deoxyguanosinetriphosphate triphosphohydrolase-like protein"/>
    <property type="match status" value="1"/>
</dbReference>
<dbReference type="Gene3D" id="1.10.3210.10">
    <property type="entry name" value="Hypothetical protein af1432"/>
    <property type="match status" value="1"/>
</dbReference>
<dbReference type="HAMAP" id="MF_01212">
    <property type="entry name" value="dGTPase_type2"/>
    <property type="match status" value="1"/>
</dbReference>
<dbReference type="InterPro" id="IPR006261">
    <property type="entry name" value="dGTPase"/>
</dbReference>
<dbReference type="InterPro" id="IPR050135">
    <property type="entry name" value="dGTPase-like"/>
</dbReference>
<dbReference type="InterPro" id="IPR023023">
    <property type="entry name" value="dNTPase_2"/>
</dbReference>
<dbReference type="InterPro" id="IPR003607">
    <property type="entry name" value="HD/PDEase_dom"/>
</dbReference>
<dbReference type="InterPro" id="IPR006674">
    <property type="entry name" value="HD_domain"/>
</dbReference>
<dbReference type="InterPro" id="IPR026875">
    <property type="entry name" value="PHydrolase_assoc_dom"/>
</dbReference>
<dbReference type="NCBIfam" id="TIGR01353">
    <property type="entry name" value="dGTP_triPase"/>
    <property type="match status" value="1"/>
</dbReference>
<dbReference type="NCBIfam" id="NF002829">
    <property type="entry name" value="PRK03007.1"/>
    <property type="match status" value="1"/>
</dbReference>
<dbReference type="PANTHER" id="PTHR11373:SF32">
    <property type="entry name" value="DEOXYGUANOSINETRIPHOSPHATE TRIPHOSPHOHYDROLASE"/>
    <property type="match status" value="1"/>
</dbReference>
<dbReference type="PANTHER" id="PTHR11373">
    <property type="entry name" value="DEOXYNUCLEOSIDE TRIPHOSPHATE TRIPHOSPHOHYDROLASE"/>
    <property type="match status" value="1"/>
</dbReference>
<dbReference type="Pfam" id="PF01966">
    <property type="entry name" value="HD"/>
    <property type="match status" value="1"/>
</dbReference>
<dbReference type="Pfam" id="PF13286">
    <property type="entry name" value="HD_assoc"/>
    <property type="match status" value="1"/>
</dbReference>
<dbReference type="SMART" id="SM00471">
    <property type="entry name" value="HDc"/>
    <property type="match status" value="1"/>
</dbReference>
<dbReference type="SUPFAM" id="SSF109604">
    <property type="entry name" value="HD-domain/PDEase-like"/>
    <property type="match status" value="1"/>
</dbReference>
<dbReference type="PROSITE" id="PS51831">
    <property type="entry name" value="HD"/>
    <property type="match status" value="1"/>
</dbReference>
<evidence type="ECO:0000255" key="1">
    <source>
        <dbReference type="HAMAP-Rule" id="MF_01212"/>
    </source>
</evidence>
<evidence type="ECO:0000255" key="2">
    <source>
        <dbReference type="PROSITE-ProRule" id="PRU01175"/>
    </source>
</evidence>
<evidence type="ECO:0000256" key="3">
    <source>
        <dbReference type="SAM" id="MobiDB-lite"/>
    </source>
</evidence>
<proteinExistence type="inferred from homology"/>
<name>DGTL1_MYCA1</name>
<feature type="chain" id="PRO_1000066420" description="Deoxyguanosinetriphosphate triphosphohydrolase-like protein">
    <location>
        <begin position="1"/>
        <end position="423"/>
    </location>
</feature>
<feature type="domain" description="HD" evidence="2">
    <location>
        <begin position="72"/>
        <end position="220"/>
    </location>
</feature>
<feature type="region of interest" description="Disordered" evidence="3">
    <location>
        <begin position="1"/>
        <end position="38"/>
    </location>
</feature>
<feature type="compositionally biased region" description="Basic and acidic residues" evidence="3">
    <location>
        <begin position="1"/>
        <end position="20"/>
    </location>
</feature>
<comment type="similarity">
    <text evidence="1">Belongs to the dGTPase family. Type 2 subfamily.</text>
</comment>
<protein>
    <recommendedName>
        <fullName evidence="1">Deoxyguanosinetriphosphate triphosphohydrolase-like protein</fullName>
    </recommendedName>
</protein>
<accession>A0QEC2</accession>
<reference key="1">
    <citation type="submission" date="2006-10" db="EMBL/GenBank/DDBJ databases">
        <authorList>
            <person name="Fleischmann R.D."/>
            <person name="Dodson R.J."/>
            <person name="Haft D.H."/>
            <person name="Merkel J.S."/>
            <person name="Nelson W.C."/>
            <person name="Fraser C.M."/>
        </authorList>
    </citation>
    <scope>NUCLEOTIDE SEQUENCE [LARGE SCALE GENOMIC DNA]</scope>
    <source>
        <strain>104</strain>
    </source>
</reference>
<gene>
    <name type="ordered locus">MAV_2042</name>
</gene>
<keyword id="KW-0378">Hydrolase</keyword>
<organism>
    <name type="scientific">Mycobacterium avium (strain 104)</name>
    <dbReference type="NCBI Taxonomy" id="243243"/>
    <lineage>
        <taxon>Bacteria</taxon>
        <taxon>Bacillati</taxon>
        <taxon>Actinomycetota</taxon>
        <taxon>Actinomycetes</taxon>
        <taxon>Mycobacteriales</taxon>
        <taxon>Mycobacteriaceae</taxon>
        <taxon>Mycobacterium</taxon>
        <taxon>Mycobacterium avium complex (MAC)</taxon>
    </lineage>
</organism>
<sequence>MTRNQHDPYDDFDRQRRVAEAPKTAGLPGTEGQHRTDFARDRARVLHSAALRRLADKTQVVGPREGDTPRTRLTHSLEVAQIGRGMAVGLGCDLDLVELAGLAHDIGHPPYGHNGERALDEVAAAYGGFEGNAQNFRILTSLEPKVLDAQGNSAGLNLTRASLDAVIKYPWRRGEGPGTSKFGFYDDDREAAAWVRAGAPAGRMCLEAQVMDWADDVAYSVHDVEDGVVSQRIDLRVLADDDEAAALAKLGESEFSRVGADDFMAAARRLSALPVVAAVGKYDATLASSVALKRLTSELVGRFASAAIATTRAAAGPGPLVRYRAELAVPDLVRAEVALLKILALQFIMSDPRHQQTQAGQRERIHRVAHWLYAGAPRTLDPVFAAAFNTAADDGARWRVIVDQIASYTEGRLERIDARQAGP</sequence>